<name>MTNN_ACTP2</name>
<reference key="1">
    <citation type="journal article" date="2008" name="J. Bacteriol.">
        <title>The complete genome sequence of Actinobacillus pleuropneumoniae L20 (serotype 5b).</title>
        <authorList>
            <person name="Foote S.J."/>
            <person name="Bosse J.T."/>
            <person name="Bouevitch A.B."/>
            <person name="Langford P.R."/>
            <person name="Young N.M."/>
            <person name="Nash J.H.E."/>
        </authorList>
    </citation>
    <scope>NUCLEOTIDE SEQUENCE [LARGE SCALE GENOMIC DNA]</scope>
    <source>
        <strain>L20</strain>
    </source>
</reference>
<protein>
    <recommendedName>
        <fullName evidence="1">5'-methylthioadenosine/S-adenosylhomocysteine nucleosidase</fullName>
        <shortName evidence="1">MTA/SAH nucleosidase</shortName>
        <shortName evidence="1">MTAN</shortName>
        <ecNumber evidence="1">3.2.2.9</ecNumber>
    </recommendedName>
    <alternativeName>
        <fullName evidence="1">5'-deoxyadenosine nucleosidase</fullName>
        <shortName evidence="1">DOA nucleosidase</shortName>
        <shortName evidence="1">dAdo nucleosidase</shortName>
    </alternativeName>
    <alternativeName>
        <fullName evidence="1">5'-methylthioadenosine nucleosidase</fullName>
        <shortName evidence="1">MTA nucleosidase</shortName>
    </alternativeName>
    <alternativeName>
        <fullName evidence="1">S-adenosylhomocysteine nucleosidase</fullName>
        <shortName evidence="1">AdoHcy nucleosidase</shortName>
        <shortName evidence="1">SAH nucleosidase</shortName>
        <shortName evidence="1">SRH nucleosidase</shortName>
    </alternativeName>
</protein>
<sequence length="232" mass="24412">MRLKIGIIGAMAQEVEILRNLMVEAKVIEIAGCKIYDGKINNTQVALLQSGIGKVAAAVGTALLLELTKPDVIINTGSAGGLDANLNVGDIVISTEVRHHDADVTAFGYEKGQLPANPAAFLPNEQLVSVALKETQTAGFNAVSGLICSGDVFVNGAEKIAQIRQDFPNVAAVEMEAAAIAQVCHAFNVPFVVVRAISDVADKESHLSFDEFLPLAAKNSSEIVVAMLNNFA</sequence>
<feature type="chain" id="PRO_0000359266" description="5'-methylthioadenosine/S-adenosylhomocysteine nucleosidase">
    <location>
        <begin position="1"/>
        <end position="232"/>
    </location>
</feature>
<feature type="active site" description="Proton acceptor" evidence="1">
    <location>
        <position position="14"/>
    </location>
</feature>
<feature type="active site" description="Proton donor" evidence="1">
    <location>
        <position position="199"/>
    </location>
</feature>
<feature type="binding site" evidence="1">
    <location>
        <position position="80"/>
    </location>
    <ligand>
        <name>substrate</name>
    </ligand>
</feature>
<feature type="binding site" evidence="1">
    <location>
        <position position="154"/>
    </location>
    <ligand>
        <name>substrate</name>
    </ligand>
</feature>
<feature type="binding site" evidence="1">
    <location>
        <begin position="175"/>
        <end position="176"/>
    </location>
    <ligand>
        <name>substrate</name>
    </ligand>
</feature>
<comment type="function">
    <text evidence="1">Catalyzes the irreversible cleavage of the glycosidic bond in both 5'-methylthioadenosine (MTA) and S-adenosylhomocysteine (SAH/AdoHcy) to adenine and the corresponding thioribose, 5'-methylthioribose and S-ribosylhomocysteine, respectively. Also cleaves 5'-deoxyadenosine, a toxic by-product of radical S-adenosylmethionine (SAM) enzymes, into 5-deoxyribose and adenine.</text>
</comment>
<comment type="catalytic activity">
    <reaction evidence="1">
        <text>S-adenosyl-L-homocysteine + H2O = S-(5-deoxy-D-ribos-5-yl)-L-homocysteine + adenine</text>
        <dbReference type="Rhea" id="RHEA:17805"/>
        <dbReference type="ChEBI" id="CHEBI:15377"/>
        <dbReference type="ChEBI" id="CHEBI:16708"/>
        <dbReference type="ChEBI" id="CHEBI:57856"/>
        <dbReference type="ChEBI" id="CHEBI:58195"/>
        <dbReference type="EC" id="3.2.2.9"/>
    </reaction>
</comment>
<comment type="catalytic activity">
    <reaction evidence="1">
        <text>S-methyl-5'-thioadenosine + H2O = 5-(methylsulfanyl)-D-ribose + adenine</text>
        <dbReference type="Rhea" id="RHEA:13617"/>
        <dbReference type="ChEBI" id="CHEBI:15377"/>
        <dbReference type="ChEBI" id="CHEBI:16708"/>
        <dbReference type="ChEBI" id="CHEBI:17509"/>
        <dbReference type="ChEBI" id="CHEBI:78440"/>
        <dbReference type="EC" id="3.2.2.9"/>
    </reaction>
</comment>
<comment type="catalytic activity">
    <reaction evidence="1">
        <text>5'-deoxyadenosine + H2O = 5-deoxy-D-ribose + adenine</text>
        <dbReference type="Rhea" id="RHEA:29859"/>
        <dbReference type="ChEBI" id="CHEBI:15377"/>
        <dbReference type="ChEBI" id="CHEBI:16708"/>
        <dbReference type="ChEBI" id="CHEBI:17319"/>
        <dbReference type="ChEBI" id="CHEBI:149540"/>
        <dbReference type="EC" id="3.2.2.9"/>
    </reaction>
    <physiologicalReaction direction="left-to-right" evidence="1">
        <dbReference type="Rhea" id="RHEA:29860"/>
    </physiologicalReaction>
</comment>
<comment type="pathway">
    <text evidence="1">Amino-acid biosynthesis; L-methionine biosynthesis via salvage pathway; S-methyl-5-thio-alpha-D-ribose 1-phosphate from S-methyl-5'-thioadenosine (hydrolase route): step 1/2.</text>
</comment>
<comment type="similarity">
    <text evidence="1">Belongs to the PNP/UDP phosphorylase family. MtnN subfamily.</text>
</comment>
<accession>A3N2T5</accession>
<keyword id="KW-0028">Amino-acid biosynthesis</keyword>
<keyword id="KW-0378">Hydrolase</keyword>
<keyword id="KW-0486">Methionine biosynthesis</keyword>
<keyword id="KW-1185">Reference proteome</keyword>
<proteinExistence type="inferred from homology"/>
<gene>
    <name evidence="1" type="primary">mtnN</name>
    <name type="ordered locus">APL_1637</name>
</gene>
<dbReference type="EC" id="3.2.2.9" evidence="1"/>
<dbReference type="EMBL" id="CP000569">
    <property type="protein sequence ID" value="ABN74721.1"/>
    <property type="molecule type" value="Genomic_DNA"/>
</dbReference>
<dbReference type="RefSeq" id="WP_005605632.1">
    <property type="nucleotide sequence ID" value="NC_009053.1"/>
</dbReference>
<dbReference type="SMR" id="A3N2T5"/>
<dbReference type="STRING" id="416269.APL_1637"/>
<dbReference type="EnsemblBacteria" id="ABN74721">
    <property type="protein sequence ID" value="ABN74721"/>
    <property type="gene ID" value="APL_1637"/>
</dbReference>
<dbReference type="KEGG" id="apl:APL_1637"/>
<dbReference type="eggNOG" id="COG0775">
    <property type="taxonomic scope" value="Bacteria"/>
</dbReference>
<dbReference type="HOGENOM" id="CLU_031248_2_2_6"/>
<dbReference type="UniPathway" id="UPA00904">
    <property type="reaction ID" value="UER00871"/>
</dbReference>
<dbReference type="Proteomes" id="UP000001432">
    <property type="component" value="Chromosome"/>
</dbReference>
<dbReference type="GO" id="GO:0005829">
    <property type="term" value="C:cytosol"/>
    <property type="evidence" value="ECO:0007669"/>
    <property type="project" value="TreeGrafter"/>
</dbReference>
<dbReference type="GO" id="GO:0008782">
    <property type="term" value="F:adenosylhomocysteine nucleosidase activity"/>
    <property type="evidence" value="ECO:0007669"/>
    <property type="project" value="UniProtKB-UniRule"/>
</dbReference>
<dbReference type="GO" id="GO:0008930">
    <property type="term" value="F:methylthioadenosine nucleosidase activity"/>
    <property type="evidence" value="ECO:0007669"/>
    <property type="project" value="UniProtKB-UniRule"/>
</dbReference>
<dbReference type="GO" id="GO:0019509">
    <property type="term" value="P:L-methionine salvage from methylthioadenosine"/>
    <property type="evidence" value="ECO:0007669"/>
    <property type="project" value="UniProtKB-UniRule"/>
</dbReference>
<dbReference type="GO" id="GO:0019284">
    <property type="term" value="P:L-methionine salvage from S-adenosylmethionine"/>
    <property type="evidence" value="ECO:0007669"/>
    <property type="project" value="TreeGrafter"/>
</dbReference>
<dbReference type="GO" id="GO:0009164">
    <property type="term" value="P:nucleoside catabolic process"/>
    <property type="evidence" value="ECO:0007669"/>
    <property type="project" value="InterPro"/>
</dbReference>
<dbReference type="CDD" id="cd09008">
    <property type="entry name" value="MTAN"/>
    <property type="match status" value="1"/>
</dbReference>
<dbReference type="FunFam" id="3.40.50.1580:FF:000001">
    <property type="entry name" value="MTA/SAH nucleosidase family protein"/>
    <property type="match status" value="1"/>
</dbReference>
<dbReference type="Gene3D" id="3.40.50.1580">
    <property type="entry name" value="Nucleoside phosphorylase domain"/>
    <property type="match status" value="1"/>
</dbReference>
<dbReference type="HAMAP" id="MF_01684">
    <property type="entry name" value="Salvage_MtnN"/>
    <property type="match status" value="1"/>
</dbReference>
<dbReference type="InterPro" id="IPR010049">
    <property type="entry name" value="MTA_SAH_Nsdase"/>
</dbReference>
<dbReference type="InterPro" id="IPR000845">
    <property type="entry name" value="Nucleoside_phosphorylase_d"/>
</dbReference>
<dbReference type="InterPro" id="IPR035994">
    <property type="entry name" value="Nucleoside_phosphorylase_sf"/>
</dbReference>
<dbReference type="NCBIfam" id="TIGR01704">
    <property type="entry name" value="MTA_SAH-Nsdase"/>
    <property type="match status" value="1"/>
</dbReference>
<dbReference type="NCBIfam" id="NF004079">
    <property type="entry name" value="PRK05584.1"/>
    <property type="match status" value="1"/>
</dbReference>
<dbReference type="PANTHER" id="PTHR46832">
    <property type="entry name" value="5'-METHYLTHIOADENOSINE/S-ADENOSYLHOMOCYSTEINE NUCLEOSIDASE"/>
    <property type="match status" value="1"/>
</dbReference>
<dbReference type="PANTHER" id="PTHR46832:SF1">
    <property type="entry name" value="5'-METHYLTHIOADENOSINE_S-ADENOSYLHOMOCYSTEINE NUCLEOSIDASE"/>
    <property type="match status" value="1"/>
</dbReference>
<dbReference type="Pfam" id="PF01048">
    <property type="entry name" value="PNP_UDP_1"/>
    <property type="match status" value="1"/>
</dbReference>
<dbReference type="SUPFAM" id="SSF53167">
    <property type="entry name" value="Purine and uridine phosphorylases"/>
    <property type="match status" value="1"/>
</dbReference>
<organism>
    <name type="scientific">Actinobacillus pleuropneumoniae serotype 5b (strain L20)</name>
    <dbReference type="NCBI Taxonomy" id="416269"/>
    <lineage>
        <taxon>Bacteria</taxon>
        <taxon>Pseudomonadati</taxon>
        <taxon>Pseudomonadota</taxon>
        <taxon>Gammaproteobacteria</taxon>
        <taxon>Pasteurellales</taxon>
        <taxon>Pasteurellaceae</taxon>
        <taxon>Actinobacillus</taxon>
    </lineage>
</organism>
<evidence type="ECO:0000255" key="1">
    <source>
        <dbReference type="HAMAP-Rule" id="MF_01684"/>
    </source>
</evidence>